<evidence type="ECO:0000255" key="1">
    <source>
        <dbReference type="HAMAP-Rule" id="MF_01553"/>
    </source>
</evidence>
<proteinExistence type="inferred from homology"/>
<keyword id="KW-0240">DNA-directed RNA polymerase</keyword>
<keyword id="KW-0548">Nucleotidyltransferase</keyword>
<keyword id="KW-0804">Transcription</keyword>
<keyword id="KW-0808">Transferase</keyword>
<comment type="function">
    <text evidence="1">A non-essential component of RNA polymerase (RNAP).</text>
</comment>
<comment type="catalytic activity">
    <reaction evidence="1">
        <text>RNA(n) + a ribonucleoside 5'-triphosphate = RNA(n+1) + diphosphate</text>
        <dbReference type="Rhea" id="RHEA:21248"/>
        <dbReference type="Rhea" id="RHEA-COMP:14527"/>
        <dbReference type="Rhea" id="RHEA-COMP:17342"/>
        <dbReference type="ChEBI" id="CHEBI:33019"/>
        <dbReference type="ChEBI" id="CHEBI:61557"/>
        <dbReference type="ChEBI" id="CHEBI:140395"/>
        <dbReference type="EC" id="2.7.7.6"/>
    </reaction>
</comment>
<comment type="subunit">
    <text evidence="1">RNAP is composed of a core of 2 alpha, a beta and a beta' subunit. The core is associated with a delta subunit, and at least one of epsilon or omega. When a sigma factor is associated with the core the holoenzyme is formed, which can initiate transcription.</text>
</comment>
<comment type="similarity">
    <text evidence="1">Belongs to the RNA polymerase subunit epsilon family.</text>
</comment>
<accession>A8YUQ8</accession>
<gene>
    <name evidence="1" type="primary">rpoY</name>
    <name type="ordered locus">lhv_0877</name>
</gene>
<dbReference type="EC" id="2.7.7.6" evidence="1"/>
<dbReference type="EMBL" id="CP000517">
    <property type="protein sequence ID" value="ABX26996.1"/>
    <property type="molecule type" value="Genomic_DNA"/>
</dbReference>
<dbReference type="RefSeq" id="WP_003627933.1">
    <property type="nucleotide sequence ID" value="NC_010080.1"/>
</dbReference>
<dbReference type="SMR" id="A8YUQ8"/>
<dbReference type="KEGG" id="lhe:lhv_0877"/>
<dbReference type="eggNOG" id="COG5503">
    <property type="taxonomic scope" value="Bacteria"/>
</dbReference>
<dbReference type="HOGENOM" id="CLU_187518_0_0_9"/>
<dbReference type="Proteomes" id="UP000000790">
    <property type="component" value="Chromosome"/>
</dbReference>
<dbReference type="GO" id="GO:0000428">
    <property type="term" value="C:DNA-directed RNA polymerase complex"/>
    <property type="evidence" value="ECO:0007669"/>
    <property type="project" value="UniProtKB-KW"/>
</dbReference>
<dbReference type="GO" id="GO:0003677">
    <property type="term" value="F:DNA binding"/>
    <property type="evidence" value="ECO:0007669"/>
    <property type="project" value="UniProtKB-UniRule"/>
</dbReference>
<dbReference type="GO" id="GO:0003899">
    <property type="term" value="F:DNA-directed RNA polymerase activity"/>
    <property type="evidence" value="ECO:0007669"/>
    <property type="project" value="UniProtKB-UniRule"/>
</dbReference>
<dbReference type="GO" id="GO:0006351">
    <property type="term" value="P:DNA-templated transcription"/>
    <property type="evidence" value="ECO:0007669"/>
    <property type="project" value="UniProtKB-UniRule"/>
</dbReference>
<dbReference type="Gene3D" id="3.10.20.730">
    <property type="entry name" value="RNAP, epsilon subunit-like"/>
    <property type="match status" value="1"/>
</dbReference>
<dbReference type="HAMAP" id="MF_01553">
    <property type="entry name" value="RNApol_bact_RpoY"/>
    <property type="match status" value="1"/>
</dbReference>
<dbReference type="InterPro" id="IPR009907">
    <property type="entry name" value="RpoY"/>
</dbReference>
<dbReference type="NCBIfam" id="NF010188">
    <property type="entry name" value="PRK13667.1"/>
    <property type="match status" value="1"/>
</dbReference>
<dbReference type="Pfam" id="PF07288">
    <property type="entry name" value="RpoY"/>
    <property type="match status" value="1"/>
</dbReference>
<reference key="1">
    <citation type="journal article" date="2008" name="J. Bacteriol.">
        <title>Genome sequence of Lactobacillus helveticus: an organism distinguished by selective gene loss and IS element expansion.</title>
        <authorList>
            <person name="Callanan M."/>
            <person name="Kaleta P."/>
            <person name="O'Callaghan J."/>
            <person name="O'Sullivan O."/>
            <person name="Jordan K."/>
            <person name="McAuliffe O."/>
            <person name="Sangrador-Vegas A."/>
            <person name="Slattery L."/>
            <person name="Fitzgerald G.F."/>
            <person name="Beresford T."/>
            <person name="Ross R.P."/>
        </authorList>
    </citation>
    <scope>NUCLEOTIDE SEQUENCE [LARGE SCALE GENOMIC DNA]</scope>
    <source>
        <strain>DPC 4571</strain>
    </source>
</reference>
<feature type="chain" id="PRO_1000073567" description="DNA-directed RNA polymerase subunit epsilon">
    <location>
        <begin position="1"/>
        <end position="73"/>
    </location>
</feature>
<sequence length="73" mass="8662">MIYKVLYQKDKIVNPRRETTQTLYMEADNMVEARSTVEDNTPYNIELIQELTGNSLAYEKEHADFKLTKFDKK</sequence>
<organism>
    <name type="scientific">Lactobacillus helveticus (strain DPC 4571)</name>
    <dbReference type="NCBI Taxonomy" id="405566"/>
    <lineage>
        <taxon>Bacteria</taxon>
        <taxon>Bacillati</taxon>
        <taxon>Bacillota</taxon>
        <taxon>Bacilli</taxon>
        <taxon>Lactobacillales</taxon>
        <taxon>Lactobacillaceae</taxon>
        <taxon>Lactobacillus</taxon>
    </lineage>
</organism>
<protein>
    <recommendedName>
        <fullName evidence="1">DNA-directed RNA polymerase subunit epsilon</fullName>
        <shortName evidence="1">RNAP epsilon subunit</shortName>
        <ecNumber evidence="1">2.7.7.6</ecNumber>
    </recommendedName>
    <alternativeName>
        <fullName evidence="1">RNA polymerase epsilon subunit</fullName>
    </alternativeName>
    <alternativeName>
        <fullName evidence="1">Transcriptase subunit epsilon</fullName>
    </alternativeName>
</protein>
<name>RPOY_LACH4</name>